<organism>
    <name type="scientific">Dictyostelium discoideum</name>
    <name type="common">Social amoeba</name>
    <dbReference type="NCBI Taxonomy" id="44689"/>
    <lineage>
        <taxon>Eukaryota</taxon>
        <taxon>Amoebozoa</taxon>
        <taxon>Evosea</taxon>
        <taxon>Eumycetozoa</taxon>
        <taxon>Dictyostelia</taxon>
        <taxon>Dictyosteliales</taxon>
        <taxon>Dictyosteliaceae</taxon>
        <taxon>Dictyostelium</taxon>
    </lineage>
</organism>
<feature type="chain" id="PRO_0000383095" description="Actobindin-B/C">
    <location>
        <begin position="1"/>
        <end position="90"/>
    </location>
</feature>
<feature type="domain" description="WH2 1" evidence="2">
    <location>
        <begin position="4"/>
        <end position="21"/>
    </location>
</feature>
<feature type="domain" description="WH2 2" evidence="2">
    <location>
        <begin position="40"/>
        <end position="57"/>
    </location>
</feature>
<feature type="region of interest" description="Disordered" evidence="3">
    <location>
        <begin position="57"/>
        <end position="90"/>
    </location>
</feature>
<protein>
    <recommendedName>
        <fullName>Actobindin-B/C</fullName>
    </recommendedName>
</protein>
<sequence>MSTTANPLLAEINKGTDLKHAETQDKSAPIIENVPIKKNDHSSLLGEVEKGAQLKHVETQDRSAPVTEGATVKSNNHSALLGEIKSKAQE</sequence>
<name>ACTOB_DICDI</name>
<keyword id="KW-0009">Actin-binding</keyword>
<keyword id="KW-1185">Reference proteome</keyword>
<keyword id="KW-0677">Repeat</keyword>
<reference key="1">
    <citation type="journal article" date="2005" name="Nature">
        <title>The genome of the social amoeba Dictyostelium discoideum.</title>
        <authorList>
            <person name="Eichinger L."/>
            <person name="Pachebat J.A."/>
            <person name="Gloeckner G."/>
            <person name="Rajandream M.A."/>
            <person name="Sucgang R."/>
            <person name="Berriman M."/>
            <person name="Song J."/>
            <person name="Olsen R."/>
            <person name="Szafranski K."/>
            <person name="Xu Q."/>
            <person name="Tunggal B."/>
            <person name="Kummerfeld S."/>
            <person name="Madera M."/>
            <person name="Konfortov B.A."/>
            <person name="Rivero F."/>
            <person name="Bankier A.T."/>
            <person name="Lehmann R."/>
            <person name="Hamlin N."/>
            <person name="Davies R."/>
            <person name="Gaudet P."/>
            <person name="Fey P."/>
            <person name="Pilcher K."/>
            <person name="Chen G."/>
            <person name="Saunders D."/>
            <person name="Sodergren E.J."/>
            <person name="Davis P."/>
            <person name="Kerhornou A."/>
            <person name="Nie X."/>
            <person name="Hall N."/>
            <person name="Anjard C."/>
            <person name="Hemphill L."/>
            <person name="Bason N."/>
            <person name="Farbrother P."/>
            <person name="Desany B."/>
            <person name="Just E."/>
            <person name="Morio T."/>
            <person name="Rost R."/>
            <person name="Churcher C.M."/>
            <person name="Cooper J."/>
            <person name="Haydock S."/>
            <person name="van Driessche N."/>
            <person name="Cronin A."/>
            <person name="Goodhead I."/>
            <person name="Muzny D.M."/>
            <person name="Mourier T."/>
            <person name="Pain A."/>
            <person name="Lu M."/>
            <person name="Harper D."/>
            <person name="Lindsay R."/>
            <person name="Hauser H."/>
            <person name="James K.D."/>
            <person name="Quiles M."/>
            <person name="Madan Babu M."/>
            <person name="Saito T."/>
            <person name="Buchrieser C."/>
            <person name="Wardroper A."/>
            <person name="Felder M."/>
            <person name="Thangavelu M."/>
            <person name="Johnson D."/>
            <person name="Knights A."/>
            <person name="Loulseged H."/>
            <person name="Mungall K.L."/>
            <person name="Oliver K."/>
            <person name="Price C."/>
            <person name="Quail M.A."/>
            <person name="Urushihara H."/>
            <person name="Hernandez J."/>
            <person name="Rabbinowitsch E."/>
            <person name="Steffen D."/>
            <person name="Sanders M."/>
            <person name="Ma J."/>
            <person name="Kohara Y."/>
            <person name="Sharp S."/>
            <person name="Simmonds M.N."/>
            <person name="Spiegler S."/>
            <person name="Tivey A."/>
            <person name="Sugano S."/>
            <person name="White B."/>
            <person name="Walker D."/>
            <person name="Woodward J.R."/>
            <person name="Winckler T."/>
            <person name="Tanaka Y."/>
            <person name="Shaulsky G."/>
            <person name="Schleicher M."/>
            <person name="Weinstock G.M."/>
            <person name="Rosenthal A."/>
            <person name="Cox E.C."/>
            <person name="Chisholm R.L."/>
            <person name="Gibbs R.A."/>
            <person name="Loomis W.F."/>
            <person name="Platzer M."/>
            <person name="Kay R.R."/>
            <person name="Williams J.G."/>
            <person name="Dear P.H."/>
            <person name="Noegel A.A."/>
            <person name="Barrell B.G."/>
            <person name="Kuspa A."/>
        </authorList>
    </citation>
    <scope>NUCLEOTIDE SEQUENCE [LARGE SCALE GENOMIC DNA]</scope>
    <source>
        <strain>AX4</strain>
    </source>
</reference>
<dbReference type="EMBL" id="AAFI02000005">
    <property type="protein sequence ID" value="EAL72109.1"/>
    <property type="molecule type" value="Genomic_DNA"/>
</dbReference>
<dbReference type="EMBL" id="AAFI02000005">
    <property type="protein sequence ID" value="EAL72110.1"/>
    <property type="molecule type" value="Genomic_DNA"/>
</dbReference>
<dbReference type="RefSeq" id="XP_646039.1">
    <property type="nucleotide sequence ID" value="XM_640947.1"/>
</dbReference>
<dbReference type="RefSeq" id="XP_646040.1">
    <property type="nucleotide sequence ID" value="XM_640948.1"/>
</dbReference>
<dbReference type="SMR" id="Q55DU1"/>
<dbReference type="FunCoup" id="Q55DU1">
    <property type="interactions" value="9"/>
</dbReference>
<dbReference type="STRING" id="44689.Q55DU1"/>
<dbReference type="PaxDb" id="44689-DDB0231662"/>
<dbReference type="EnsemblProtists" id="EAL72109">
    <property type="protein sequence ID" value="EAL72109"/>
    <property type="gene ID" value="DDB_G0269518"/>
</dbReference>
<dbReference type="EnsemblProtists" id="EAL72110">
    <property type="protein sequence ID" value="EAL72110"/>
    <property type="gene ID" value="DDB_G0269520"/>
</dbReference>
<dbReference type="GeneID" id="8616986"/>
<dbReference type="GeneID" id="8616987"/>
<dbReference type="KEGG" id="ddi:DDB_G0269518"/>
<dbReference type="KEGG" id="ddi:DDB_G0269520"/>
<dbReference type="dictyBase" id="DDB_G0269518">
    <property type="gene designation" value="abnB"/>
</dbReference>
<dbReference type="dictyBase" id="DDB_G0269520">
    <property type="gene designation" value="abnC"/>
</dbReference>
<dbReference type="VEuPathDB" id="AmoebaDB:DDB_G0269518"/>
<dbReference type="eggNOG" id="ENOG502SBN0">
    <property type="taxonomic scope" value="Eukaryota"/>
</dbReference>
<dbReference type="HOGENOM" id="CLU_175897_0_0_1"/>
<dbReference type="InParanoid" id="Q55DU1"/>
<dbReference type="OMA" id="NDIKNHA"/>
<dbReference type="PRO" id="PR:Q55DU1"/>
<dbReference type="Proteomes" id="UP000002195">
    <property type="component" value="Chromosome 1"/>
</dbReference>
<dbReference type="GO" id="GO:0005829">
    <property type="term" value="C:cytosol"/>
    <property type="evidence" value="ECO:0000314"/>
    <property type="project" value="dictyBase"/>
</dbReference>
<dbReference type="GO" id="GO:0031012">
    <property type="term" value="C:extracellular matrix"/>
    <property type="evidence" value="ECO:0007005"/>
    <property type="project" value="dictyBase"/>
</dbReference>
<dbReference type="GO" id="GO:0003779">
    <property type="term" value="F:actin binding"/>
    <property type="evidence" value="ECO:0000250"/>
    <property type="project" value="dictyBase"/>
</dbReference>
<dbReference type="CDD" id="cd22063">
    <property type="entry name" value="WH2_Actobindin"/>
    <property type="match status" value="1"/>
</dbReference>
<dbReference type="InterPro" id="IPR016365">
    <property type="entry name" value="Actobindin"/>
</dbReference>
<dbReference type="InterPro" id="IPR003124">
    <property type="entry name" value="WH2_dom"/>
</dbReference>
<dbReference type="Pfam" id="PF02205">
    <property type="entry name" value="WH2"/>
    <property type="match status" value="2"/>
</dbReference>
<dbReference type="PIRSF" id="PIRSF002724">
    <property type="entry name" value="Actobindin"/>
    <property type="match status" value="1"/>
</dbReference>
<dbReference type="SMART" id="SM00246">
    <property type="entry name" value="WH2"/>
    <property type="match status" value="2"/>
</dbReference>
<dbReference type="PROSITE" id="PS51082">
    <property type="entry name" value="WH2"/>
    <property type="match status" value="2"/>
</dbReference>
<accession>Q55DU1</accession>
<gene>
    <name type="primary">abnB</name>
    <name type="ORF">DDB_G0269518</name>
</gene>
<gene>
    <name type="primary">abnC</name>
    <name type="ORF">DDB_G0269520</name>
</gene>
<evidence type="ECO:0000250" key="1"/>
<evidence type="ECO:0000255" key="2">
    <source>
        <dbReference type="PROSITE-ProRule" id="PRU00406"/>
    </source>
</evidence>
<evidence type="ECO:0000256" key="3">
    <source>
        <dbReference type="SAM" id="MobiDB-lite"/>
    </source>
</evidence>
<proteinExistence type="inferred from homology"/>
<comment type="function">
    <text evidence="1">Is able to bind two actin monomers at high concentrations of G-actin. Inhibits actin polymerization by sequestering G-actin and stabilizing actin dimers (By similarity).</text>
</comment>
<comment type="subunit">
    <text evidence="1">Monomer.</text>
</comment>